<protein>
    <recommendedName>
        <fullName evidence="1">Ribosomal RNA small subunit methyltransferase H</fullName>
        <ecNumber evidence="1">2.1.1.199</ecNumber>
    </recommendedName>
    <alternativeName>
        <fullName evidence="1">16S rRNA m(4)C1402 methyltransferase</fullName>
    </alternativeName>
    <alternativeName>
        <fullName evidence="1">rRNA (cytosine-N(4)-)-methyltransferase RsmH</fullName>
    </alternativeName>
</protein>
<feature type="chain" id="PRO_0000386762" description="Ribosomal RNA small subunit methyltransferase H">
    <location>
        <begin position="1"/>
        <end position="346"/>
    </location>
</feature>
<feature type="region of interest" description="Disordered" evidence="2">
    <location>
        <begin position="270"/>
        <end position="346"/>
    </location>
</feature>
<feature type="binding site" evidence="1">
    <location>
        <begin position="46"/>
        <end position="48"/>
    </location>
    <ligand>
        <name>S-adenosyl-L-methionine</name>
        <dbReference type="ChEBI" id="CHEBI:59789"/>
    </ligand>
</feature>
<feature type="binding site" evidence="1">
    <location>
        <position position="63"/>
    </location>
    <ligand>
        <name>S-adenosyl-L-methionine</name>
        <dbReference type="ChEBI" id="CHEBI:59789"/>
    </ligand>
</feature>
<feature type="binding site" evidence="1">
    <location>
        <position position="90"/>
    </location>
    <ligand>
        <name>S-adenosyl-L-methionine</name>
        <dbReference type="ChEBI" id="CHEBI:59789"/>
    </ligand>
</feature>
<feature type="binding site" evidence="1">
    <location>
        <position position="113"/>
    </location>
    <ligand>
        <name>S-adenosyl-L-methionine</name>
        <dbReference type="ChEBI" id="CHEBI:59789"/>
    </ligand>
</feature>
<feature type="binding site" evidence="1">
    <location>
        <position position="120"/>
    </location>
    <ligand>
        <name>S-adenosyl-L-methionine</name>
        <dbReference type="ChEBI" id="CHEBI:59789"/>
    </ligand>
</feature>
<sequence length="346" mass="37502">MASLGGDNSQAEGAEVRHVPVLIAEVIDALKPAPGAVIVDGTFGAGGYTRRILETGADVIAIDRDPTAIEAGRAMEKEFPGRLNLVESRFSALDEAVARMSGAGKKVDGVVLDIGVSSMQIDEAERGFSFQKDGPLDMRMSSRGPSAADAVNRLKTGDLARIFNFLGEERHAGRIARMIEKRRAAKPFTRTLDLANAIETLVGRNPKDRIHPATRVFQALRVYVNDELGELARALLAAERILKPGGRLVVVTFHSLEDRMVKRFFADRAGGSAGSRHMPETHMRLPSFTPAVKGAVGPTPEEEERNPRARSAKLRAGIRTENPPLEDDLSLFGLPKLPETNELARS</sequence>
<organism>
    <name type="scientific">Brucella canis (strain ATCC 23365 / NCTC 10854 / RM-666)</name>
    <dbReference type="NCBI Taxonomy" id="483179"/>
    <lineage>
        <taxon>Bacteria</taxon>
        <taxon>Pseudomonadati</taxon>
        <taxon>Pseudomonadota</taxon>
        <taxon>Alphaproteobacteria</taxon>
        <taxon>Hyphomicrobiales</taxon>
        <taxon>Brucellaceae</taxon>
        <taxon>Brucella/Ochrobactrum group</taxon>
        <taxon>Brucella</taxon>
    </lineage>
</organism>
<evidence type="ECO:0000255" key="1">
    <source>
        <dbReference type="HAMAP-Rule" id="MF_01007"/>
    </source>
</evidence>
<evidence type="ECO:0000256" key="2">
    <source>
        <dbReference type="SAM" id="MobiDB-lite"/>
    </source>
</evidence>
<gene>
    <name evidence="1" type="primary">rsmH</name>
    <name type="synonym">mraW</name>
    <name type="ordered locus">BCAN_A1472</name>
</gene>
<proteinExistence type="inferred from homology"/>
<dbReference type="EC" id="2.1.1.199" evidence="1"/>
<dbReference type="EMBL" id="CP000872">
    <property type="protein sequence ID" value="ABX62503.1"/>
    <property type="molecule type" value="Genomic_DNA"/>
</dbReference>
<dbReference type="SMR" id="A9M698"/>
<dbReference type="KEGG" id="bcs:BCAN_A1472"/>
<dbReference type="HOGENOM" id="CLU_038422_1_1_5"/>
<dbReference type="Proteomes" id="UP000001385">
    <property type="component" value="Chromosome I"/>
</dbReference>
<dbReference type="GO" id="GO:0005737">
    <property type="term" value="C:cytoplasm"/>
    <property type="evidence" value="ECO:0007669"/>
    <property type="project" value="UniProtKB-SubCell"/>
</dbReference>
<dbReference type="GO" id="GO:0071424">
    <property type="term" value="F:rRNA (cytosine-N4-)-methyltransferase activity"/>
    <property type="evidence" value="ECO:0007669"/>
    <property type="project" value="UniProtKB-UniRule"/>
</dbReference>
<dbReference type="GO" id="GO:0070475">
    <property type="term" value="P:rRNA base methylation"/>
    <property type="evidence" value="ECO:0007669"/>
    <property type="project" value="UniProtKB-UniRule"/>
</dbReference>
<dbReference type="CDD" id="cd02440">
    <property type="entry name" value="AdoMet_MTases"/>
    <property type="match status" value="1"/>
</dbReference>
<dbReference type="Gene3D" id="1.10.150.170">
    <property type="entry name" value="Putative methyltransferase TM0872, insert domain"/>
    <property type="match status" value="1"/>
</dbReference>
<dbReference type="Gene3D" id="3.40.50.150">
    <property type="entry name" value="Vaccinia Virus protein VP39"/>
    <property type="match status" value="1"/>
</dbReference>
<dbReference type="HAMAP" id="MF_01007">
    <property type="entry name" value="16SrRNA_methyltr_H"/>
    <property type="match status" value="1"/>
</dbReference>
<dbReference type="InterPro" id="IPR002903">
    <property type="entry name" value="RsmH"/>
</dbReference>
<dbReference type="InterPro" id="IPR023397">
    <property type="entry name" value="SAM-dep_MeTrfase_MraW_recog"/>
</dbReference>
<dbReference type="InterPro" id="IPR029063">
    <property type="entry name" value="SAM-dependent_MTases_sf"/>
</dbReference>
<dbReference type="NCBIfam" id="TIGR00006">
    <property type="entry name" value="16S rRNA (cytosine(1402)-N(4))-methyltransferase RsmH"/>
    <property type="match status" value="1"/>
</dbReference>
<dbReference type="PANTHER" id="PTHR11265:SF0">
    <property type="entry name" value="12S RRNA N4-METHYLCYTIDINE METHYLTRANSFERASE"/>
    <property type="match status" value="1"/>
</dbReference>
<dbReference type="PANTHER" id="PTHR11265">
    <property type="entry name" value="S-ADENOSYL-METHYLTRANSFERASE MRAW"/>
    <property type="match status" value="1"/>
</dbReference>
<dbReference type="Pfam" id="PF01795">
    <property type="entry name" value="Methyltransf_5"/>
    <property type="match status" value="1"/>
</dbReference>
<dbReference type="PIRSF" id="PIRSF004486">
    <property type="entry name" value="MraW"/>
    <property type="match status" value="1"/>
</dbReference>
<dbReference type="SUPFAM" id="SSF81799">
    <property type="entry name" value="Putative methyltransferase TM0872, insert domain"/>
    <property type="match status" value="1"/>
</dbReference>
<dbReference type="SUPFAM" id="SSF53335">
    <property type="entry name" value="S-adenosyl-L-methionine-dependent methyltransferases"/>
    <property type="match status" value="1"/>
</dbReference>
<reference key="1">
    <citation type="submission" date="2007-10" db="EMBL/GenBank/DDBJ databases">
        <title>Brucella canis ATCC 23365 whole genome shotgun sequencing project.</title>
        <authorList>
            <person name="Setubal J.C."/>
            <person name="Bowns C."/>
            <person name="Boyle S."/>
            <person name="Crasta O.R."/>
            <person name="Czar M.J."/>
            <person name="Dharmanolla C."/>
            <person name="Gillespie J.J."/>
            <person name="Kenyon R.W."/>
            <person name="Lu J."/>
            <person name="Mane S."/>
            <person name="Mohapatra S."/>
            <person name="Nagrani S."/>
            <person name="Purkayastha A."/>
            <person name="Rajasimha H.K."/>
            <person name="Shallom J.M."/>
            <person name="Shallom S."/>
            <person name="Shukla M."/>
            <person name="Snyder E.E."/>
            <person name="Sobral B.W."/>
            <person name="Wattam A.R."/>
            <person name="Will R."/>
            <person name="Williams K."/>
            <person name="Yoo H."/>
            <person name="Bruce D."/>
            <person name="Detter C."/>
            <person name="Munk C."/>
            <person name="Brettin T.S."/>
        </authorList>
    </citation>
    <scope>NUCLEOTIDE SEQUENCE [LARGE SCALE GENOMIC DNA]</scope>
    <source>
        <strain>ATCC 23365 / NCTC 10854 / RM-666</strain>
    </source>
</reference>
<keyword id="KW-0963">Cytoplasm</keyword>
<keyword id="KW-0489">Methyltransferase</keyword>
<keyword id="KW-1185">Reference proteome</keyword>
<keyword id="KW-0698">rRNA processing</keyword>
<keyword id="KW-0949">S-adenosyl-L-methionine</keyword>
<keyword id="KW-0808">Transferase</keyword>
<name>RSMH_BRUC2</name>
<accession>A9M698</accession>
<comment type="function">
    <text evidence="1">Specifically methylates the N4 position of cytidine in position 1402 (C1402) of 16S rRNA.</text>
</comment>
<comment type="catalytic activity">
    <reaction evidence="1">
        <text>cytidine(1402) in 16S rRNA + S-adenosyl-L-methionine = N(4)-methylcytidine(1402) in 16S rRNA + S-adenosyl-L-homocysteine + H(+)</text>
        <dbReference type="Rhea" id="RHEA:42928"/>
        <dbReference type="Rhea" id="RHEA-COMP:10286"/>
        <dbReference type="Rhea" id="RHEA-COMP:10287"/>
        <dbReference type="ChEBI" id="CHEBI:15378"/>
        <dbReference type="ChEBI" id="CHEBI:57856"/>
        <dbReference type="ChEBI" id="CHEBI:59789"/>
        <dbReference type="ChEBI" id="CHEBI:74506"/>
        <dbReference type="ChEBI" id="CHEBI:82748"/>
        <dbReference type="EC" id="2.1.1.199"/>
    </reaction>
</comment>
<comment type="subcellular location">
    <subcellularLocation>
        <location evidence="1">Cytoplasm</location>
    </subcellularLocation>
</comment>
<comment type="similarity">
    <text evidence="1">Belongs to the methyltransferase superfamily. RsmH family.</text>
</comment>